<protein>
    <recommendedName>
        <fullName evidence="1">Large ribosomal subunit protein uL29</fullName>
    </recommendedName>
    <alternativeName>
        <fullName>50S ribosomal protein L29</fullName>
    </alternativeName>
</protein>
<sequence>MKYTELKDKSIKELEELLHAKKAELFELRVKLKNMQLSNPNEIKKARRNIARINTAINAYYSSSVE</sequence>
<proteinExistence type="inferred from homology"/>
<accession>Q9ZJS1</accession>
<dbReference type="EMBL" id="AE001439">
    <property type="protein sequence ID" value="AAD06797.1"/>
    <property type="molecule type" value="Genomic_DNA"/>
</dbReference>
<dbReference type="PIR" id="G71834">
    <property type="entry name" value="G71834"/>
</dbReference>
<dbReference type="RefSeq" id="WP_000877892.1">
    <property type="nucleotide sequence ID" value="NC_000921.1"/>
</dbReference>
<dbReference type="SMR" id="Q9ZJS1"/>
<dbReference type="KEGG" id="hpj:jhp_1231"/>
<dbReference type="PATRIC" id="fig|85963.30.peg.1340"/>
<dbReference type="eggNOG" id="COG0255">
    <property type="taxonomic scope" value="Bacteria"/>
</dbReference>
<dbReference type="Proteomes" id="UP000000804">
    <property type="component" value="Chromosome"/>
</dbReference>
<dbReference type="GO" id="GO:0022625">
    <property type="term" value="C:cytosolic large ribosomal subunit"/>
    <property type="evidence" value="ECO:0007669"/>
    <property type="project" value="TreeGrafter"/>
</dbReference>
<dbReference type="GO" id="GO:0003735">
    <property type="term" value="F:structural constituent of ribosome"/>
    <property type="evidence" value="ECO:0007669"/>
    <property type="project" value="InterPro"/>
</dbReference>
<dbReference type="GO" id="GO:0006412">
    <property type="term" value="P:translation"/>
    <property type="evidence" value="ECO:0007669"/>
    <property type="project" value="UniProtKB-UniRule"/>
</dbReference>
<dbReference type="CDD" id="cd00427">
    <property type="entry name" value="Ribosomal_L29_HIP"/>
    <property type="match status" value="1"/>
</dbReference>
<dbReference type="Gene3D" id="1.10.287.310">
    <property type="match status" value="1"/>
</dbReference>
<dbReference type="HAMAP" id="MF_00374">
    <property type="entry name" value="Ribosomal_uL29"/>
    <property type="match status" value="1"/>
</dbReference>
<dbReference type="InterPro" id="IPR050063">
    <property type="entry name" value="Ribosomal_protein_uL29"/>
</dbReference>
<dbReference type="InterPro" id="IPR001854">
    <property type="entry name" value="Ribosomal_uL29"/>
</dbReference>
<dbReference type="InterPro" id="IPR018254">
    <property type="entry name" value="Ribosomal_uL29_CS"/>
</dbReference>
<dbReference type="InterPro" id="IPR036049">
    <property type="entry name" value="Ribosomal_uL29_sf"/>
</dbReference>
<dbReference type="NCBIfam" id="TIGR00012">
    <property type="entry name" value="L29"/>
    <property type="match status" value="1"/>
</dbReference>
<dbReference type="PANTHER" id="PTHR10916">
    <property type="entry name" value="60S RIBOSOMAL PROTEIN L35/50S RIBOSOMAL PROTEIN L29"/>
    <property type="match status" value="1"/>
</dbReference>
<dbReference type="PANTHER" id="PTHR10916:SF0">
    <property type="entry name" value="LARGE RIBOSOMAL SUBUNIT PROTEIN UL29C"/>
    <property type="match status" value="1"/>
</dbReference>
<dbReference type="Pfam" id="PF00831">
    <property type="entry name" value="Ribosomal_L29"/>
    <property type="match status" value="1"/>
</dbReference>
<dbReference type="SUPFAM" id="SSF46561">
    <property type="entry name" value="Ribosomal protein L29 (L29p)"/>
    <property type="match status" value="1"/>
</dbReference>
<dbReference type="PROSITE" id="PS00579">
    <property type="entry name" value="RIBOSOMAL_L29"/>
    <property type="match status" value="1"/>
</dbReference>
<comment type="similarity">
    <text evidence="1">Belongs to the universal ribosomal protein uL29 family.</text>
</comment>
<name>RL29_HELPJ</name>
<evidence type="ECO:0000305" key="1"/>
<keyword id="KW-0687">Ribonucleoprotein</keyword>
<keyword id="KW-0689">Ribosomal protein</keyword>
<feature type="chain" id="PRO_0000130401" description="Large ribosomal subunit protein uL29">
    <location>
        <begin position="1"/>
        <end position="66"/>
    </location>
</feature>
<organism>
    <name type="scientific">Helicobacter pylori (strain J99 / ATCC 700824)</name>
    <name type="common">Campylobacter pylori J99</name>
    <dbReference type="NCBI Taxonomy" id="85963"/>
    <lineage>
        <taxon>Bacteria</taxon>
        <taxon>Pseudomonadati</taxon>
        <taxon>Campylobacterota</taxon>
        <taxon>Epsilonproteobacteria</taxon>
        <taxon>Campylobacterales</taxon>
        <taxon>Helicobacteraceae</taxon>
        <taxon>Helicobacter</taxon>
    </lineage>
</organism>
<gene>
    <name type="primary">rpmC</name>
    <name type="ordered locus">jhp_1231</name>
</gene>
<reference key="1">
    <citation type="journal article" date="1999" name="Nature">
        <title>Genomic sequence comparison of two unrelated isolates of the human gastric pathogen Helicobacter pylori.</title>
        <authorList>
            <person name="Alm R.A."/>
            <person name="Ling L.-S.L."/>
            <person name="Moir D.T."/>
            <person name="King B.L."/>
            <person name="Brown E.D."/>
            <person name="Doig P.C."/>
            <person name="Smith D.R."/>
            <person name="Noonan B."/>
            <person name="Guild B.C."/>
            <person name="deJonge B.L."/>
            <person name="Carmel G."/>
            <person name="Tummino P.J."/>
            <person name="Caruso A."/>
            <person name="Uria-Nickelsen M."/>
            <person name="Mills D.M."/>
            <person name="Ives C."/>
            <person name="Gibson R."/>
            <person name="Merberg D."/>
            <person name="Mills S.D."/>
            <person name="Jiang Q."/>
            <person name="Taylor D.E."/>
            <person name="Vovis G.F."/>
            <person name="Trust T.J."/>
        </authorList>
    </citation>
    <scope>NUCLEOTIDE SEQUENCE [LARGE SCALE GENOMIC DNA]</scope>
    <source>
        <strain>J99 / ATCC 700824</strain>
    </source>
</reference>